<keyword id="KW-0106">Calcium</keyword>
<keyword id="KW-0165">Cleavage on pair of basic residues</keyword>
<keyword id="KW-0968">Cytoplasmic vesicle</keyword>
<keyword id="KW-0903">Direct protein sequencing</keyword>
<keyword id="KW-1015">Disulfide bond</keyword>
<keyword id="KW-0378">Hydrolase</keyword>
<keyword id="KW-0443">Lipid metabolism</keyword>
<keyword id="KW-0458">Lysosome</keyword>
<keyword id="KW-0479">Metal-binding</keyword>
<keyword id="KW-1208">Phospholipid metabolism</keyword>
<keyword id="KW-1185">Reference proteome</keyword>
<keyword id="KW-0964">Secreted</keyword>
<keyword id="KW-0732">Signal</keyword>
<gene>
    <name type="primary">Pla2g10</name>
</gene>
<accession>Q9QXX3</accession>
<accession>Q9EQK6</accession>
<feature type="signal peptide" evidence="6">
    <location>
        <begin position="1"/>
        <end position="17"/>
    </location>
</feature>
<feature type="propeptide" id="PRO_0000022766" evidence="6">
    <location>
        <begin position="18"/>
        <end position="28"/>
    </location>
</feature>
<feature type="chain" id="PRO_0000022767" description="Group 10 secretory phospholipase A2">
    <location>
        <begin position="29"/>
        <end position="151"/>
    </location>
</feature>
<feature type="active site" evidence="2">
    <location>
        <position position="74"/>
    </location>
</feature>
<feature type="active site" evidence="2">
    <location>
        <position position="119"/>
    </location>
</feature>
<feature type="binding site" evidence="1">
    <location>
        <position position="54"/>
    </location>
    <ligand>
        <name>Ca(2+)</name>
        <dbReference type="ChEBI" id="CHEBI:29108"/>
    </ligand>
</feature>
<feature type="binding site" evidence="2">
    <location>
        <position position="56"/>
    </location>
    <ligand>
        <name>Ca(2+)</name>
        <dbReference type="ChEBI" id="CHEBI:29108"/>
    </ligand>
</feature>
<feature type="binding site" evidence="2">
    <location>
        <position position="58"/>
    </location>
    <ligand>
        <name>Ca(2+)</name>
        <dbReference type="ChEBI" id="CHEBI:29108"/>
    </ligand>
</feature>
<feature type="binding site" evidence="2">
    <location>
        <position position="75"/>
    </location>
    <ligand>
        <name>Ca(2+)</name>
        <dbReference type="ChEBI" id="CHEBI:29108"/>
    </ligand>
</feature>
<feature type="disulfide bond" evidence="2">
    <location>
        <begin position="39"/>
        <end position="97"/>
    </location>
</feature>
<feature type="disulfide bond" evidence="2">
    <location>
        <begin position="53"/>
        <end position="143"/>
    </location>
</feature>
<feature type="disulfide bond" evidence="2">
    <location>
        <begin position="55"/>
        <end position="71"/>
    </location>
</feature>
<feature type="disulfide bond" evidence="2">
    <location>
        <begin position="70"/>
        <end position="125"/>
    </location>
</feature>
<feature type="disulfide bond" evidence="2">
    <location>
        <begin position="76"/>
        <end position="150"/>
    </location>
</feature>
<feature type="disulfide bond" evidence="2">
    <location>
        <begin position="77"/>
        <end position="118"/>
    </location>
</feature>
<feature type="disulfide bond" evidence="2">
    <location>
        <begin position="86"/>
        <end position="111"/>
    </location>
</feature>
<feature type="disulfide bond" evidence="2">
    <location>
        <begin position="104"/>
        <end position="116"/>
    </location>
</feature>
<feature type="mutagenesis site" description="Impaired acrosome reaction." evidence="11">
    <original>H</original>
    <variation>Q</variation>
    <location>
        <position position="74"/>
    </location>
</feature>
<feature type="sequence conflict" description="In Ref. 2; AAG43522." evidence="16" ref="2">
    <original>N</original>
    <variation>D</variation>
    <location>
        <position position="151"/>
    </location>
</feature>
<protein>
    <recommendedName>
        <fullName>Group 10 secretory phospholipase A2</fullName>
        <ecNumber evidence="5 9">3.1.1.4</ecNumber>
    </recommendedName>
    <alternativeName>
        <fullName>Group X secretory phospholipase A2</fullName>
        <shortName>GX sPLA2</shortName>
        <shortName>sPLA2-X</shortName>
    </alternativeName>
    <alternativeName>
        <fullName>Phosphatidylcholine 2-acylhydrolase 10</fullName>
    </alternativeName>
</protein>
<comment type="function">
    <text evidence="2 5 7 9 10 11 12 13 14 15">Secretory calcium-dependent phospholipase A2 that primarily targets extracellular phospholipids. Hydrolyzes the ester bond of the fatty acyl group attached at sn-2 position of phospholipids with preference for phosphatidylcholines and phosphatidylglycerols over phosphatidylethanolamines. Preferentially releases sn-2 omega-6 and omega-3 polyunsaturated fatty acyl (PUFA) chains over saturated fatty acyls (PubMed:10531313, PubMed:12359733). Contributes to phospholipid remodeling of very low-density lipoprotein (VLDL), low-density lipoprotein (LDL) and high-density lipoprotein (HDL) particles (By similarity). Hydrolyzes LDL phospholipids releasing unsaturated fatty acids that regulate macrophage differentiation toward foam cells (By similarity). Efficiently hydrolyzes and inactivates PAF, a potent lipid mediator present in oxidized LDL (By similarity). May act in an autocrine and paracrine manner. Secreted by lung epithelium, targets membrane phospholipids of infiltrating eosinophils, releasing arachidonate and boosting eicosanoid and cysteinyl leukotriene synthesis involved in airway inflammatory response (PubMed:17403936, PubMed:29093264). Secreted by gut epithelium, hydrolyzes dietary and biliary phosphatidylcholines in the gastrointestinal lumen, thereby regulating adipogenesis and body weight (PubMed:21266581). Plays a stem cell regulator role in colon epithelium. Within intracellular compartment, mediates Paneth-like cell differentiation and its stem cell supporting functions by inhibiting Wnt signaling pathway in intestinal stem cell (ISC). Secreted in the intestinal lumen upon inflammation, acts in an autocrine way and promotes prostaglandin E2 synthesis that stimulates the Wnt signaling pathway in ISCs and tissue regeneration (PubMed:27292189). May participate in hair follicle morphogenesis by regulating phosphatidylethanolamines metabolism at the outermost epithelial layer and facilitating melanin synthesis (PubMed:21266583). By generating lysophosphatidylcholines (LPCs) at sperm acrosome controls sperm cell capacitation, acrosome reaction and overall fertility (PubMed:20424324, PubMed:21266581). May promote neurite outgrowth in neuron fibers involved in nociception (PubMed:21266581). Contributes to lipid remodeling of cellular membranes and generation of lipid mediators involved in pathogen clearance. Cleaves sn-2 fatty acyl chains of phosphatidylglycerols and phosphatidylethanolamines, which are major components of membrane phospholipids in bacteria (PubMed:12359733). Displays bactericidal activity against Gram-positive bacteria by directly hydrolyzing phospholipids of the bacterial membrane (PubMed:11694541). In pulmonary epithelium, may contribute to host defense response against adenoviral infection. Prevents adenovirus entry into host cells by hydrolyzing host cell plasma membrane, releasing C16:0 LPCs that inhibit virus-mediated membrane fusion and viral infection. Likely prevents adenoviral entry into the endosomes of host cells (By similarity). May play a role in maturation and activation of innate immune cells including macrophages, group 2 innate lymphoid cells and mast cells (PubMed:29093264).</text>
</comment>
<comment type="catalytic activity">
    <reaction evidence="3 4 5 9">
        <text>a 1,2-diacyl-sn-glycero-3-phosphocholine + H2O = a 1-acyl-sn-glycero-3-phosphocholine + a fatty acid + H(+)</text>
        <dbReference type="Rhea" id="RHEA:15801"/>
        <dbReference type="ChEBI" id="CHEBI:15377"/>
        <dbReference type="ChEBI" id="CHEBI:15378"/>
        <dbReference type="ChEBI" id="CHEBI:28868"/>
        <dbReference type="ChEBI" id="CHEBI:57643"/>
        <dbReference type="ChEBI" id="CHEBI:58168"/>
        <dbReference type="EC" id="3.1.1.4"/>
    </reaction>
    <physiologicalReaction direction="left-to-right" evidence="17 18">
        <dbReference type="Rhea" id="RHEA:15802"/>
    </physiologicalReaction>
</comment>
<comment type="catalytic activity">
    <reaction evidence="2">
        <text>1-hexadecanoyl-2-(9Z-octadecenoyl)-sn-glycero-3-phosphocholine + H2O = 1-hexadecanoyl-sn-glycero-3-phosphocholine + (9Z)-octadecenoate + H(+)</text>
        <dbReference type="Rhea" id="RHEA:38779"/>
        <dbReference type="ChEBI" id="CHEBI:15377"/>
        <dbReference type="ChEBI" id="CHEBI:15378"/>
        <dbReference type="ChEBI" id="CHEBI:30823"/>
        <dbReference type="ChEBI" id="CHEBI:72998"/>
        <dbReference type="ChEBI" id="CHEBI:73001"/>
    </reaction>
    <physiologicalReaction direction="left-to-right" evidence="2">
        <dbReference type="Rhea" id="RHEA:38780"/>
    </physiologicalReaction>
</comment>
<comment type="catalytic activity">
    <reaction evidence="9">
        <text>1-octadecanoyl-2-(5Z,8Z,11Z,14Z-eicosatetraenoyl)-sn-glycero-3-phosphocholine + H2O = 1-octadecanoyl-sn-glycero-3-phosphocholine + (5Z,8Z,11Z,14Z)-eicosatetraenoate + H(+)</text>
        <dbReference type="Rhea" id="RHEA:40519"/>
        <dbReference type="ChEBI" id="CHEBI:15377"/>
        <dbReference type="ChEBI" id="CHEBI:15378"/>
        <dbReference type="ChEBI" id="CHEBI:32395"/>
        <dbReference type="ChEBI" id="CHEBI:73858"/>
        <dbReference type="ChEBI" id="CHEBI:74965"/>
    </reaction>
    <physiologicalReaction direction="left-to-right" evidence="18">
        <dbReference type="Rhea" id="RHEA:40520"/>
    </physiologicalReaction>
</comment>
<comment type="catalytic activity">
    <reaction evidence="5 9">
        <text>1,2-dihexadecanoyl-sn-glycero-3-phosphocholine + H2O = 1-hexadecanoyl-sn-glycero-3-phosphocholine + hexadecanoate + H(+)</text>
        <dbReference type="Rhea" id="RHEA:41223"/>
        <dbReference type="ChEBI" id="CHEBI:7896"/>
        <dbReference type="ChEBI" id="CHEBI:15377"/>
        <dbReference type="ChEBI" id="CHEBI:15378"/>
        <dbReference type="ChEBI" id="CHEBI:72998"/>
        <dbReference type="ChEBI" id="CHEBI:72999"/>
    </reaction>
    <physiologicalReaction direction="left-to-right" evidence="17 18">
        <dbReference type="Rhea" id="RHEA:41224"/>
    </physiologicalReaction>
</comment>
<comment type="catalytic activity">
    <reaction evidence="9">
        <text>1-hexadecanoyl-2-(9Z-octadecenoyl)-sn-glycero-3-phosphoglycerol + H2O = 1-hexadecanoyl-sn-glycero-3-phosphoglycerol + (9Z)-octadecenoate + H(+)</text>
        <dbReference type="Rhea" id="RHEA:44524"/>
        <dbReference type="ChEBI" id="CHEBI:15377"/>
        <dbReference type="ChEBI" id="CHEBI:15378"/>
        <dbReference type="ChEBI" id="CHEBI:30823"/>
        <dbReference type="ChEBI" id="CHEBI:84472"/>
        <dbReference type="ChEBI" id="CHEBI:84475"/>
    </reaction>
    <physiologicalReaction direction="left-to-right" evidence="18">
        <dbReference type="Rhea" id="RHEA:44525"/>
    </physiologicalReaction>
</comment>
<comment type="catalytic activity">
    <reaction evidence="5">
        <text>1,2-dihexadecanoyl-sn-glycero-3-phospho-(1'-sn-glycerol) + H2O = 1-hexadecanoyl-sn-glycero-3-phospho-(1'-sn-glycerol) + hexadecanoate + H(+)</text>
        <dbReference type="Rhea" id="RHEA:45472"/>
        <dbReference type="ChEBI" id="CHEBI:7896"/>
        <dbReference type="ChEBI" id="CHEBI:15377"/>
        <dbReference type="ChEBI" id="CHEBI:15378"/>
        <dbReference type="ChEBI" id="CHEBI:72829"/>
        <dbReference type="ChEBI" id="CHEBI:75158"/>
    </reaction>
    <physiologicalReaction direction="left-to-right" evidence="17">
        <dbReference type="Rhea" id="RHEA:45473"/>
    </physiologicalReaction>
</comment>
<comment type="catalytic activity">
    <reaction evidence="9">
        <text>1-hexadecanoyl-2-(9Z-octadecenoyl)-sn-glycero-3-phospho-L-serine + H2O = 1-hexadecanoyl-sn-glycero-3-phospho-L-serine + (9Z)-octadecenoate + H(+)</text>
        <dbReference type="Rhea" id="RHEA:41752"/>
        <dbReference type="ChEBI" id="CHEBI:15377"/>
        <dbReference type="ChEBI" id="CHEBI:15378"/>
        <dbReference type="ChEBI" id="CHEBI:30823"/>
        <dbReference type="ChEBI" id="CHEBI:75020"/>
        <dbReference type="ChEBI" id="CHEBI:75029"/>
    </reaction>
    <physiologicalReaction direction="left-to-right" evidence="18">
        <dbReference type="Rhea" id="RHEA:41753"/>
    </physiologicalReaction>
</comment>
<comment type="catalytic activity">
    <reaction evidence="9 13">
        <text>1-hexadecanoyl-2-(9Z,12Z-octadecadienoyl)-sn-glycero-3-phosphoethanolamine + H2O = 1-hexadecanoyl-sn-glycero-3-phosphoethanolamine + (9Z,12Z)-octadecadienoate + H(+)</text>
        <dbReference type="Rhea" id="RHEA:40815"/>
        <dbReference type="ChEBI" id="CHEBI:15377"/>
        <dbReference type="ChEBI" id="CHEBI:15378"/>
        <dbReference type="ChEBI" id="CHEBI:30245"/>
        <dbReference type="ChEBI" id="CHEBI:73004"/>
        <dbReference type="ChEBI" id="CHEBI:73008"/>
    </reaction>
    <physiologicalReaction direction="left-to-right" evidence="18 19">
        <dbReference type="Rhea" id="RHEA:40816"/>
    </physiologicalReaction>
</comment>
<comment type="catalytic activity">
    <reaction evidence="2">
        <text>1-hexadecanoyl-2-(9Z-octadecenoyl)-sn-glycero-3-phosphate + H2O = 1-hexadecanoyl-sn-glycero-3-phosphate + (9Z)-octadecenoate + H(+)</text>
        <dbReference type="Rhea" id="RHEA:63996"/>
        <dbReference type="ChEBI" id="CHEBI:15377"/>
        <dbReference type="ChEBI" id="CHEBI:15378"/>
        <dbReference type="ChEBI" id="CHEBI:30823"/>
        <dbReference type="ChEBI" id="CHEBI:57518"/>
        <dbReference type="ChEBI" id="CHEBI:64839"/>
    </reaction>
    <physiologicalReaction direction="left-to-right" evidence="2">
        <dbReference type="Rhea" id="RHEA:63997"/>
    </physiologicalReaction>
</comment>
<comment type="catalytic activity">
    <reaction evidence="2">
        <text>1-O-hexadecyl-2-acetyl-sn-glycero-3-phosphocholine + H2O = 1-O-hexadecyl-sn-glycero-3-phosphocholine + acetate + H(+)</text>
        <dbReference type="Rhea" id="RHEA:40479"/>
        <dbReference type="ChEBI" id="CHEBI:15377"/>
        <dbReference type="ChEBI" id="CHEBI:15378"/>
        <dbReference type="ChEBI" id="CHEBI:30089"/>
        <dbReference type="ChEBI" id="CHEBI:44811"/>
        <dbReference type="ChEBI" id="CHEBI:64496"/>
    </reaction>
    <physiologicalReaction direction="left-to-right" evidence="2">
        <dbReference type="Rhea" id="RHEA:40480"/>
    </physiologicalReaction>
</comment>
<comment type="cofactor">
    <cofactor evidence="2">
        <name>Ca(2+)</name>
        <dbReference type="ChEBI" id="CHEBI:29108"/>
    </cofactor>
    <text evidence="2">Binds 1 Ca(2+) ion per subunit.</text>
</comment>
<comment type="subunit">
    <text evidence="6 8">Interacts with PLA2R1; this interaction mediates PLA2G10 clearance and inactivation.</text>
</comment>
<comment type="subcellular location">
    <subcellularLocation>
        <location evidence="5 8 11">Secreted</location>
    </subcellularLocation>
    <subcellularLocation>
        <location evidence="8">Lysosome</location>
    </subcellularLocation>
    <subcellularLocation>
        <location evidence="11">Cytoplasmic vesicle</location>
        <location evidence="11">Secretory vesicle</location>
        <location evidence="11">Acrosome</location>
    </subcellularLocation>
</comment>
<comment type="tissue specificity">
    <text evidence="6 11 12 13 14">Expressed at high levels in testis and the gastrointestinal tract including stomach and colon. Expressed at lower levels in other tissues including small intestine, uterus, oviduct, lung, thymus, spleen and brain (PubMed:11019817, PubMed:21266581). Expressed in Paneth-like secretory epithelial cells of the colon (PubMed:27292189). Expressed in gastric and ileac epithelial cells and in glandular epithelium of intestinal mucosa (at protein level) (PubMed:21266581). Expressed in late spermatogenic cells, spermatocytes and spermatids, but not spermatogonia in seminiferous tubules (at protein level) (PubMed:20424324). Expressed mainly in the apical side of endometrial epithelial cells and in the interstitium beneath the epithelium of uterus (at protein level) (PubMed:21266581). Expressed in resident spleen macrophages (at protein level) (PubMed:11019817). Expressed at outermost layer of hair follicles (PubMed:21266583). Expressed in dorsal root ganglia in both NEFH-positive A-fibers and PRPH-positive C-fibers (at protein level) (PubMed:21266581).</text>
</comment>
<comment type="developmental stage">
    <text evidence="13">During hair follicle growth cycle, it is detected at low levels at 17.5 dpc (hair folliculogenesis stage), increases to a maximum expression level by P10 (anagen), declines to the basal level at P15-20 (catagen to telogen), and again increases at P25 (re-entry into the next anagen).</text>
</comment>
<comment type="induction">
    <text evidence="10 15">Up-regulated in alveolar macrophages upon allergen-induced airway inflammation (PubMed:17403936). Up-regulated in bronchoalveolar lavage fluid (BALF) in response to house dust mite proteolytic allergens (PubMed:29093264).</text>
</comment>
<comment type="disruption phenotype">
    <text evidence="10 11 12 13 15">Mutant male mice have reduced fertility due to deficient acrosome reaction (PubMed:20424324). Mutant mice are lean and protected from age-related adiposity and fatty liver (PubMed:21266581). Mutant mice show resistance to allergen-induced asthma, with marked reduction of inflammatory cell recruitment in the lungs, reduced goblet cell metaplasia, smooth muscle cell layer thickening and subepithelial fibrosis and impaired mucus hypersecretion. This resistance to allergen-induced inflammation is associated with deficient T helper type 2 immune response and decreased eicosanoid synthesis (PubMed:17403936). Mutant mice are protected against airway allergic inflammation induced by house dust mite allergens (PubMed:29093264). Mutant mice show hair shaft abnormalities including hypoplastic outer root sheath and reduced number of melanin granules (PubMed:21266583).</text>
</comment>
<comment type="similarity">
    <text evidence="16">Belongs to the phospholipase A2 family.</text>
</comment>
<sequence length="151" mass="17005">MLLLLLLLLLGPGPGFSEATRRSHVYKRGLLELAGTLDCVGPRSPMAYMNYGCYCGLGGHGEPRDAIDWCCYHHDCCYSRAQDAGCSPKLDRYPWKCMDHHILCGPAENKCQELLCRCDEELAYCLAGTEYHLKYLFFPSILCEKDSPKCN</sequence>
<evidence type="ECO:0000250" key="1"/>
<evidence type="ECO:0000250" key="2">
    <source>
        <dbReference type="UniProtKB" id="O15496"/>
    </source>
</evidence>
<evidence type="ECO:0000255" key="3">
    <source>
        <dbReference type="PROSITE-ProRule" id="PRU10035"/>
    </source>
</evidence>
<evidence type="ECO:0000255" key="4">
    <source>
        <dbReference type="PROSITE-ProRule" id="PRU10036"/>
    </source>
</evidence>
<evidence type="ECO:0000269" key="5">
    <source>
    </source>
</evidence>
<evidence type="ECO:0000269" key="6">
    <source>
    </source>
</evidence>
<evidence type="ECO:0000269" key="7">
    <source>
    </source>
</evidence>
<evidence type="ECO:0000269" key="8">
    <source>
    </source>
</evidence>
<evidence type="ECO:0000269" key="9">
    <source>
    </source>
</evidence>
<evidence type="ECO:0000269" key="10">
    <source>
    </source>
</evidence>
<evidence type="ECO:0000269" key="11">
    <source>
    </source>
</evidence>
<evidence type="ECO:0000269" key="12">
    <source>
    </source>
</evidence>
<evidence type="ECO:0000269" key="13">
    <source>
    </source>
</evidence>
<evidence type="ECO:0000269" key="14">
    <source>
    </source>
</evidence>
<evidence type="ECO:0000269" key="15">
    <source>
    </source>
</evidence>
<evidence type="ECO:0000305" key="16"/>
<evidence type="ECO:0000305" key="17">
    <source>
    </source>
</evidence>
<evidence type="ECO:0000305" key="18">
    <source>
    </source>
</evidence>
<evidence type="ECO:0000305" key="19">
    <source>
    </source>
</evidence>
<organism>
    <name type="scientific">Mus musculus</name>
    <name type="common">Mouse</name>
    <dbReference type="NCBI Taxonomy" id="10090"/>
    <lineage>
        <taxon>Eukaryota</taxon>
        <taxon>Metazoa</taxon>
        <taxon>Chordata</taxon>
        <taxon>Craniata</taxon>
        <taxon>Vertebrata</taxon>
        <taxon>Euteleostomi</taxon>
        <taxon>Mammalia</taxon>
        <taxon>Eutheria</taxon>
        <taxon>Euarchontoglires</taxon>
        <taxon>Glires</taxon>
        <taxon>Rodentia</taxon>
        <taxon>Myomorpha</taxon>
        <taxon>Muroidea</taxon>
        <taxon>Muridae</taxon>
        <taxon>Murinae</taxon>
        <taxon>Mus</taxon>
        <taxon>Mus</taxon>
    </lineage>
</organism>
<dbReference type="EC" id="3.1.1.4" evidence="5 9"/>
<dbReference type="EMBL" id="AF166097">
    <property type="protein sequence ID" value="AAF04498.2"/>
    <property type="molecule type" value="mRNA"/>
</dbReference>
<dbReference type="EMBL" id="AF210429">
    <property type="protein sequence ID" value="AAG43522.1"/>
    <property type="molecule type" value="mRNA"/>
</dbReference>
<dbReference type="CCDS" id="CCDS27967.1"/>
<dbReference type="RefSeq" id="NP_036117.1">
    <property type="nucleotide sequence ID" value="NM_011987.4"/>
</dbReference>
<dbReference type="SMR" id="Q9QXX3"/>
<dbReference type="FunCoup" id="Q9QXX3">
    <property type="interactions" value="496"/>
</dbReference>
<dbReference type="STRING" id="10090.ENSMUSP00000023364"/>
<dbReference type="BindingDB" id="Q9QXX3"/>
<dbReference type="ChEMBL" id="CHEMBL4200"/>
<dbReference type="PaxDb" id="10090-ENSMUSP00000023364"/>
<dbReference type="ProteomicsDB" id="295452"/>
<dbReference type="Antibodypedia" id="24881">
    <property type="antibodies" value="97 antibodies from 15 providers"/>
</dbReference>
<dbReference type="DNASU" id="26565"/>
<dbReference type="Ensembl" id="ENSMUST00000023364.7">
    <property type="protein sequence ID" value="ENSMUSP00000023364.7"/>
    <property type="gene ID" value="ENSMUSG00000022683.14"/>
</dbReference>
<dbReference type="GeneID" id="26565"/>
<dbReference type="KEGG" id="mmu:26565"/>
<dbReference type="UCSC" id="uc007ygh.2">
    <property type="organism name" value="mouse"/>
</dbReference>
<dbReference type="AGR" id="MGI:1347522"/>
<dbReference type="CTD" id="8399"/>
<dbReference type="MGI" id="MGI:1347522">
    <property type="gene designation" value="Pla2g10"/>
</dbReference>
<dbReference type="VEuPathDB" id="HostDB:ENSMUSG00000022683"/>
<dbReference type="eggNOG" id="KOG4087">
    <property type="taxonomic scope" value="Eukaryota"/>
</dbReference>
<dbReference type="GeneTree" id="ENSGT00940000157803"/>
<dbReference type="HOGENOM" id="CLU_090683_3_1_1"/>
<dbReference type="InParanoid" id="Q9QXX3"/>
<dbReference type="OMA" id="YPRFLCE"/>
<dbReference type="OrthoDB" id="10069378at2759"/>
<dbReference type="PhylomeDB" id="Q9QXX3"/>
<dbReference type="TreeFam" id="TF319283"/>
<dbReference type="Reactome" id="R-MMU-1482788">
    <property type="pathway name" value="Acyl chain remodelling of PC"/>
</dbReference>
<dbReference type="Reactome" id="R-MMU-1482801">
    <property type="pathway name" value="Acyl chain remodelling of PS"/>
</dbReference>
<dbReference type="Reactome" id="R-MMU-1482839">
    <property type="pathway name" value="Acyl chain remodelling of PE"/>
</dbReference>
<dbReference type="Reactome" id="R-MMU-1482922">
    <property type="pathway name" value="Acyl chain remodelling of PI"/>
</dbReference>
<dbReference type="Reactome" id="R-MMU-1482925">
    <property type="pathway name" value="Acyl chain remodelling of PG"/>
</dbReference>
<dbReference type="Reactome" id="R-MMU-1483166">
    <property type="pathway name" value="Synthesis of PA"/>
</dbReference>
<dbReference type="BioGRID-ORCS" id="26565">
    <property type="hits" value="3 hits in 79 CRISPR screens"/>
</dbReference>
<dbReference type="PRO" id="PR:Q9QXX3"/>
<dbReference type="Proteomes" id="UP000000589">
    <property type="component" value="Chromosome 16"/>
</dbReference>
<dbReference type="RNAct" id="Q9QXX3">
    <property type="molecule type" value="protein"/>
</dbReference>
<dbReference type="Bgee" id="ENSMUSG00000022683">
    <property type="expression patterns" value="Expressed in epithelium of stomach and 61 other cell types or tissues"/>
</dbReference>
<dbReference type="ExpressionAtlas" id="Q9QXX3">
    <property type="expression patterns" value="baseline and differential"/>
</dbReference>
<dbReference type="GO" id="GO:0001669">
    <property type="term" value="C:acrosomal vesicle"/>
    <property type="evidence" value="ECO:0000314"/>
    <property type="project" value="UniProtKB"/>
</dbReference>
<dbReference type="GO" id="GO:0005615">
    <property type="term" value="C:extracellular space"/>
    <property type="evidence" value="ECO:0007669"/>
    <property type="project" value="Ensembl"/>
</dbReference>
<dbReference type="GO" id="GO:0005764">
    <property type="term" value="C:lysosome"/>
    <property type="evidence" value="ECO:0007669"/>
    <property type="project" value="UniProtKB-SubCell"/>
</dbReference>
<dbReference type="GO" id="GO:0003847">
    <property type="term" value="F:1-alkyl-2-acetylglycerophosphocholine esterase activity"/>
    <property type="evidence" value="ECO:0000250"/>
    <property type="project" value="UniProtKB"/>
</dbReference>
<dbReference type="GO" id="GO:0005509">
    <property type="term" value="F:calcium ion binding"/>
    <property type="evidence" value="ECO:0007669"/>
    <property type="project" value="InterPro"/>
</dbReference>
<dbReference type="GO" id="GO:0047498">
    <property type="term" value="F:calcium-dependent phospholipase A2 activity"/>
    <property type="evidence" value="ECO:0000314"/>
    <property type="project" value="UniProtKB"/>
</dbReference>
<dbReference type="GO" id="GO:0004620">
    <property type="term" value="F:phospholipase activity"/>
    <property type="evidence" value="ECO:0000315"/>
    <property type="project" value="BHF-UCL"/>
</dbReference>
<dbReference type="GO" id="GO:0050482">
    <property type="term" value="P:arachidonate secretion"/>
    <property type="evidence" value="ECO:0007669"/>
    <property type="project" value="InterPro"/>
</dbReference>
<dbReference type="GO" id="GO:0007411">
    <property type="term" value="P:axon guidance"/>
    <property type="evidence" value="ECO:0000266"/>
    <property type="project" value="MGI"/>
</dbReference>
<dbReference type="GO" id="GO:1990830">
    <property type="term" value="P:cellular response to leukemia inhibitory factor"/>
    <property type="evidence" value="ECO:0000270"/>
    <property type="project" value="MGI"/>
</dbReference>
<dbReference type="GO" id="GO:0042632">
    <property type="term" value="P:cholesterol homeostasis"/>
    <property type="evidence" value="ECO:0000315"/>
    <property type="project" value="BHF-UCL"/>
</dbReference>
<dbReference type="GO" id="GO:0051607">
    <property type="term" value="P:defense response to virus"/>
    <property type="evidence" value="ECO:0007669"/>
    <property type="project" value="Ensembl"/>
</dbReference>
<dbReference type="GO" id="GO:0043249">
    <property type="term" value="P:erythrocyte maturation"/>
    <property type="evidence" value="ECO:0000315"/>
    <property type="project" value="MGI"/>
</dbReference>
<dbReference type="GO" id="GO:0009566">
    <property type="term" value="P:fertilization"/>
    <property type="evidence" value="ECO:0000315"/>
    <property type="project" value="MGI"/>
</dbReference>
<dbReference type="GO" id="GO:0031069">
    <property type="term" value="P:hair follicle morphogenesis"/>
    <property type="evidence" value="ECO:0000315"/>
    <property type="project" value="UniProtKB"/>
</dbReference>
<dbReference type="GO" id="GO:0036335">
    <property type="term" value="P:intestinal stem cell homeostasis"/>
    <property type="evidence" value="ECO:0000315"/>
    <property type="project" value="UniProtKB"/>
</dbReference>
<dbReference type="GO" id="GO:0034374">
    <property type="term" value="P:low-density lipoprotein particle remodeling"/>
    <property type="evidence" value="ECO:0007669"/>
    <property type="project" value="Ensembl"/>
</dbReference>
<dbReference type="GO" id="GO:0051977">
    <property type="term" value="P:lysophospholipid transport"/>
    <property type="evidence" value="ECO:0000266"/>
    <property type="project" value="MGI"/>
</dbReference>
<dbReference type="GO" id="GO:0042116">
    <property type="term" value="P:macrophage activation"/>
    <property type="evidence" value="ECO:0000314"/>
    <property type="project" value="MGI"/>
</dbReference>
<dbReference type="GO" id="GO:0090370">
    <property type="term" value="P:negative regulation of cholesterol efflux"/>
    <property type="evidence" value="ECO:0000314"/>
    <property type="project" value="BHF-UCL"/>
</dbReference>
<dbReference type="GO" id="GO:1900016">
    <property type="term" value="P:negative regulation of cytokine production involved in inflammatory response"/>
    <property type="evidence" value="ECO:0000315"/>
    <property type="project" value="MGI"/>
</dbReference>
<dbReference type="GO" id="GO:0050728">
    <property type="term" value="P:negative regulation of inflammatory response"/>
    <property type="evidence" value="ECO:0000315"/>
    <property type="project" value="MGI"/>
</dbReference>
<dbReference type="GO" id="GO:0000122">
    <property type="term" value="P:negative regulation of transcription by RNA polymerase II"/>
    <property type="evidence" value="ECO:0000314"/>
    <property type="project" value="BHF-UCL"/>
</dbReference>
<dbReference type="GO" id="GO:0141193">
    <property type="term" value="P:nuclear receptor-mediated signaling pathway"/>
    <property type="evidence" value="ECO:0000315"/>
    <property type="project" value="BHF-UCL"/>
</dbReference>
<dbReference type="GO" id="GO:0046473">
    <property type="term" value="P:phosphatidic acid metabolic process"/>
    <property type="evidence" value="ECO:0000314"/>
    <property type="project" value="UniProtKB"/>
</dbReference>
<dbReference type="GO" id="GO:0034638">
    <property type="term" value="P:phosphatidylcholine catabolic process"/>
    <property type="evidence" value="ECO:0007669"/>
    <property type="project" value="Ensembl"/>
</dbReference>
<dbReference type="GO" id="GO:0046470">
    <property type="term" value="P:phosphatidylcholine metabolic process"/>
    <property type="evidence" value="ECO:0000314"/>
    <property type="project" value="UniProtKB"/>
</dbReference>
<dbReference type="GO" id="GO:0046337">
    <property type="term" value="P:phosphatidylethanolamine metabolic process"/>
    <property type="evidence" value="ECO:0000314"/>
    <property type="project" value="UniProtKB"/>
</dbReference>
<dbReference type="GO" id="GO:0046471">
    <property type="term" value="P:phosphatidylglycerol metabolic process"/>
    <property type="evidence" value="ECO:0000314"/>
    <property type="project" value="UniProtKB"/>
</dbReference>
<dbReference type="GO" id="GO:0006658">
    <property type="term" value="P:phosphatidylserine metabolic process"/>
    <property type="evidence" value="ECO:0000314"/>
    <property type="project" value="UniProtKB"/>
</dbReference>
<dbReference type="GO" id="GO:0006644">
    <property type="term" value="P:phospholipid metabolic process"/>
    <property type="evidence" value="ECO:0000315"/>
    <property type="project" value="MGI"/>
</dbReference>
<dbReference type="GO" id="GO:0062234">
    <property type="term" value="P:platelet activating factor catabolic process"/>
    <property type="evidence" value="ECO:0000250"/>
    <property type="project" value="UniProtKB"/>
</dbReference>
<dbReference type="GO" id="GO:2000344">
    <property type="term" value="P:positive regulation of acrosome reaction"/>
    <property type="evidence" value="ECO:0000315"/>
    <property type="project" value="UniProtKB"/>
</dbReference>
<dbReference type="GO" id="GO:0090238">
    <property type="term" value="P:positive regulation of arachidonate secretion"/>
    <property type="evidence" value="ECO:0000314"/>
    <property type="project" value="BHF-UCL"/>
</dbReference>
<dbReference type="GO" id="GO:0010884">
    <property type="term" value="P:positive regulation of lipid storage"/>
    <property type="evidence" value="ECO:0007669"/>
    <property type="project" value="Ensembl"/>
</dbReference>
<dbReference type="GO" id="GO:0032308">
    <property type="term" value="P:positive regulation of prostaglandin secretion"/>
    <property type="evidence" value="ECO:0007669"/>
    <property type="project" value="Ensembl"/>
</dbReference>
<dbReference type="GO" id="GO:0051247">
    <property type="term" value="P:positive regulation of protein metabolic process"/>
    <property type="evidence" value="ECO:0007669"/>
    <property type="project" value="Ensembl"/>
</dbReference>
<dbReference type="GO" id="GO:0002532">
    <property type="term" value="P:production of molecular mediator involved in inflammatory response"/>
    <property type="evidence" value="ECO:0000314"/>
    <property type="project" value="MGI"/>
</dbReference>
<dbReference type="GO" id="GO:0001516">
    <property type="term" value="P:prostaglandin biosynthetic process"/>
    <property type="evidence" value="ECO:0000314"/>
    <property type="project" value="UniProtKB"/>
</dbReference>
<dbReference type="GO" id="GO:0043030">
    <property type="term" value="P:regulation of macrophage activation"/>
    <property type="evidence" value="ECO:0007669"/>
    <property type="project" value="Ensembl"/>
</dbReference>
<dbReference type="GO" id="GO:0023019">
    <property type="term" value="P:signal transduction involved in regulation of gene expression"/>
    <property type="evidence" value="ECO:0000314"/>
    <property type="project" value="BHF-UCL"/>
</dbReference>
<dbReference type="CDD" id="cd00125">
    <property type="entry name" value="PLA2c"/>
    <property type="match status" value="1"/>
</dbReference>
<dbReference type="FunFam" id="1.20.90.10:FF:000001">
    <property type="entry name" value="Basic phospholipase A2 homolog"/>
    <property type="match status" value="1"/>
</dbReference>
<dbReference type="Gene3D" id="1.20.90.10">
    <property type="entry name" value="Phospholipase A2 domain"/>
    <property type="match status" value="1"/>
</dbReference>
<dbReference type="InterPro" id="IPR001211">
    <property type="entry name" value="PLipase_A2"/>
</dbReference>
<dbReference type="InterPro" id="IPR033112">
    <property type="entry name" value="PLipase_A2_Asp_AS"/>
</dbReference>
<dbReference type="InterPro" id="IPR016090">
    <property type="entry name" value="PLipase_A2_dom"/>
</dbReference>
<dbReference type="InterPro" id="IPR036444">
    <property type="entry name" value="PLipase_A2_dom_sf"/>
</dbReference>
<dbReference type="InterPro" id="IPR033113">
    <property type="entry name" value="PLipase_A2_His_AS"/>
</dbReference>
<dbReference type="PANTHER" id="PTHR11716:SF4">
    <property type="entry name" value="GROUP 10 SECRETORY PHOSPHOLIPASE A2"/>
    <property type="match status" value="1"/>
</dbReference>
<dbReference type="PANTHER" id="PTHR11716">
    <property type="entry name" value="PHOSPHOLIPASE A2 FAMILY MEMBER"/>
    <property type="match status" value="1"/>
</dbReference>
<dbReference type="Pfam" id="PF00068">
    <property type="entry name" value="Phospholip_A2_1"/>
    <property type="match status" value="1"/>
</dbReference>
<dbReference type="PRINTS" id="PR00389">
    <property type="entry name" value="PHPHLIPASEA2"/>
</dbReference>
<dbReference type="SMART" id="SM00085">
    <property type="entry name" value="PA2c"/>
    <property type="match status" value="1"/>
</dbReference>
<dbReference type="SUPFAM" id="SSF48619">
    <property type="entry name" value="Phospholipase A2, PLA2"/>
    <property type="match status" value="1"/>
</dbReference>
<dbReference type="PROSITE" id="PS00119">
    <property type="entry name" value="PA2_ASP"/>
    <property type="match status" value="1"/>
</dbReference>
<dbReference type="PROSITE" id="PS00118">
    <property type="entry name" value="PA2_HIS"/>
    <property type="match status" value="1"/>
</dbReference>
<name>PA2GX_MOUSE</name>
<reference key="1">
    <citation type="journal article" date="1999" name="J. Biol. Chem.">
        <title>On the diversity of secreted phospholipases A2. Cloning, tissue distribution, and functional expression of two novel mouse group II enzymes.</title>
        <authorList>
            <person name="Valentin E."/>
            <person name="Ghomashchi F."/>
            <person name="Gelb M.H."/>
            <person name="Lazdunski M."/>
            <person name="Lambeau G."/>
        </authorList>
    </citation>
    <scope>NUCLEOTIDE SEQUENCE [MRNA]</scope>
    <scope>FUNCTION</scope>
    <scope>CATALYTIC ACTIVITY</scope>
    <scope>SUBCELLULAR LOCATION</scope>
</reference>
<reference key="2">
    <citation type="journal article" date="2000" name="Arch. Biochem. Biophys.">
        <title>Mouse group X secretory phospholipase A2 induces a potent release of arachidonic acid from spleen cells and acts as a ligand for the phospholipase A2 receptor.</title>
        <authorList>
            <person name="Morioka Y."/>
            <person name="Saiga A."/>
            <person name="Yokota Y."/>
            <person name="Suzuki N."/>
            <person name="Ikeda M."/>
            <person name="Ono T."/>
            <person name="Nakano K."/>
            <person name="Fujii N."/>
            <person name="Ishizaki J."/>
            <person name="Arita H."/>
            <person name="Hanasaki K."/>
        </authorList>
    </citation>
    <scope>NUCLEOTIDE SEQUENCE [MRNA]</scope>
    <scope>PROTEIN SEQUENCE OF 18-30</scope>
    <scope>CHARACTERIZATION</scope>
    <scope>TISSUE SPECIFICITY</scope>
    <scope>INTERACTION WITH PLA2R1</scope>
    <source>
        <strain>BALB/cJ</strain>
    </source>
</reference>
<reference key="3">
    <citation type="journal article" date="2001" name="FEBS Lett.">
        <title>Clearance of group X secretory phospholipase A(2) via mouse phospholipase A(2) receptor.</title>
        <authorList>
            <person name="Yokota Y."/>
            <person name="Notoya M."/>
            <person name="Higashino K."/>
            <person name="Ishimoto Y."/>
            <person name="Nakano K."/>
            <person name="Arita H."/>
            <person name="Hanasaki K."/>
        </authorList>
    </citation>
    <scope>INTERACTION WITH PLA2R1</scope>
    <scope>SUBCELLULAR LOCATION</scope>
</reference>
<reference key="4">
    <citation type="journal article" date="2002" name="J. Biol. Chem.">
        <title>Bactericidal properties of human and murine groups I, II, V, X, and XII secreted phospholipases A(2).</title>
        <authorList>
            <person name="Koduri R.S."/>
            <person name="Groenroos J.O."/>
            <person name="Laine V.J."/>
            <person name="Le Calvez C."/>
            <person name="Lambeau G."/>
            <person name="Nevalainen T.J."/>
            <person name="Gelb M.H."/>
        </authorList>
    </citation>
    <scope>FUNCTION</scope>
</reference>
<reference key="5">
    <citation type="journal article" date="2002" name="J. Biol. Chem.">
        <title>Interfacial kinetic and binding properties of the complete set of human and mouse groups I, II, V, X, and XII secreted phospholipases A2.</title>
        <authorList>
            <person name="Singer A.G."/>
            <person name="Ghomashchi F."/>
            <person name="Le Calvez C."/>
            <person name="Bollinger J."/>
            <person name="Bezzine S."/>
            <person name="Rouault M."/>
            <person name="Sadilek M."/>
            <person name="Nguyen E."/>
            <person name="Lazdunski M."/>
            <person name="Lambeau G."/>
            <person name="Gelb M.H."/>
        </authorList>
    </citation>
    <scope>FUNCTION</scope>
    <scope>CATALYTIC ACTIVITY</scope>
</reference>
<reference key="6">
    <citation type="journal article" date="2007" name="J. Exp. Med.">
        <title>Importance of group X-secreted phospholipase A2 in allergen-induced airway inflammation and remodeling in a mouse asthma model.</title>
        <authorList>
            <person name="Henderson W.R. Jr."/>
            <person name="Chi E.Y."/>
            <person name="Bollinger J.G."/>
            <person name="Tien Y.T."/>
            <person name="Ye X."/>
            <person name="Castelli L."/>
            <person name="Rubtsov Y.P."/>
            <person name="Singer A.G."/>
            <person name="Chiang G.K."/>
            <person name="Nevalainen T."/>
            <person name="Rudensky A.Y."/>
            <person name="Gelb M.H."/>
        </authorList>
    </citation>
    <scope>FUNCTION</scope>
    <scope>DISRUPTION PHENOTYPE</scope>
    <scope>INDUCTION</scope>
</reference>
<reference key="7">
    <citation type="journal article" date="2010" name="J. Clin. Invest.">
        <title>Group X phospholipase A2 is released during sperm acrosome reaction and controls fertility outcome in mice.</title>
        <authorList>
            <person name="Escoffier J."/>
            <person name="Jemel I."/>
            <person name="Tanemoto A."/>
            <person name="Taketomi Y."/>
            <person name="Payre C."/>
            <person name="Coatrieux C."/>
            <person name="Sato H."/>
            <person name="Yamamoto K."/>
            <person name="Masuda S."/>
            <person name="Pernet-Gallay K."/>
            <person name="Pierre V."/>
            <person name="Hara S."/>
            <person name="Murakami M."/>
            <person name="De Waard M."/>
            <person name="Lambeau G."/>
            <person name="Arnoult C."/>
        </authorList>
    </citation>
    <scope>FUNCTION</scope>
    <scope>TISSUE SPECIFICITY</scope>
    <scope>SUBCELLULAR LOCATION</scope>
    <scope>DISRUPTION PHENOTYPE</scope>
    <scope>MUTAGENESIS OF HIS-74</scope>
</reference>
<reference key="8">
    <citation type="journal article" date="2011" name="J. Biol. Chem.">
        <title>Hair follicular expression and function of group X secreted phospholipase A2 in mouse skin.</title>
        <authorList>
            <person name="Yamamoto K."/>
            <person name="Taketomi Y."/>
            <person name="Isogai Y."/>
            <person name="Miki Y."/>
            <person name="Sato H."/>
            <person name="Masuda S."/>
            <person name="Nishito Y."/>
            <person name="Morioka K."/>
            <person name="Ishimoto Y."/>
            <person name="Suzuki N."/>
            <person name="Yokota Y."/>
            <person name="Hanasaki K."/>
            <person name="Ishikawa Y."/>
            <person name="Ishii T."/>
            <person name="Kobayashi T."/>
            <person name="Fukami K."/>
            <person name="Ikeda K."/>
            <person name="Nakanishi H."/>
            <person name="Taguchi R."/>
            <person name="Murakami M."/>
        </authorList>
    </citation>
    <scope>FUNCTION</scope>
    <scope>CATALYTIC ACTIVITY</scope>
    <scope>TISSUE SPECIFICITY</scope>
    <scope>DEVELOPMENTAL STAGE</scope>
    <scope>DISRUPTION PHENOTYPE</scope>
</reference>
<reference key="9">
    <citation type="journal article" date="2011" name="J. Biol. Chem.">
        <title>Physiological roles of group X-secreted phospholipase A2 in reproduction, gastrointestinal phospholipid digestion, and neuronal function.</title>
        <authorList>
            <person name="Sato H."/>
            <person name="Isogai Y."/>
            <person name="Masuda S."/>
            <person name="Taketomi Y."/>
            <person name="Miki Y."/>
            <person name="Kamei D."/>
            <person name="Hara S."/>
            <person name="Kobayashi T."/>
            <person name="Ishikawa Y."/>
            <person name="Ishii T."/>
            <person name="Ikeda K."/>
            <person name="Taguchi R."/>
            <person name="Ishimoto Y."/>
            <person name="Suzuki N."/>
            <person name="Yokota Y."/>
            <person name="Hanasaki K."/>
            <person name="Suzuki-Yamamoto T."/>
            <person name="Yamamoto K."/>
            <person name="Murakami M."/>
        </authorList>
    </citation>
    <scope>FUNCTION</scope>
    <scope>TISSUE SPECIFICITY</scope>
    <scope>DISRUPTION PHENOTYPE</scope>
</reference>
<reference key="10">
    <citation type="journal article" date="2016" name="Cell Stem Cell">
        <title>Secreted Phospholipases A2 Are Intestinal Stem Cell Niche Factors with Distinct Roles in Homeostasis, Inflammation, and Cancer.</title>
        <authorList>
            <person name="Schewe M."/>
            <person name="Franken P.F."/>
            <person name="Sacchetti A."/>
            <person name="Schmitt M."/>
            <person name="Joosten R."/>
            <person name="Boettcher R."/>
            <person name="van Royen M.E."/>
            <person name="Jeammet L."/>
            <person name="Payre C."/>
            <person name="Scott P.M."/>
            <person name="Webb N.R."/>
            <person name="Gelb M."/>
            <person name="Cormier R.T."/>
            <person name="Lambeau G."/>
            <person name="Fodde R."/>
        </authorList>
    </citation>
    <scope>FUNCTION</scope>
    <scope>TISSUE SPECIFICITY</scope>
</reference>
<reference key="11">
    <citation type="journal article" date="2017" name="JCI Insight">
        <title>Secreted PLA2 group X orchestrates innate and adaptive immune responses to inhaled allergen.</title>
        <authorList>
            <person name="Nolin J.D."/>
            <person name="Lai Y."/>
            <person name="Ogden H.L."/>
            <person name="Manicone A.M."/>
            <person name="Murphy R.C."/>
            <person name="An D."/>
            <person name="Frevert C.W."/>
            <person name="Ghomashchi F."/>
            <person name="Naika G.S."/>
            <person name="Gelb M.H."/>
            <person name="Gauvreau G.M."/>
            <person name="Piliponsky A.M."/>
            <person name="Altemeier W.A."/>
            <person name="Hallstrand T.S."/>
        </authorList>
    </citation>
    <scope>FUNCTION</scope>
    <scope>DISRUPTION PHENOTYPE</scope>
    <scope>INDUCTION</scope>
</reference>
<proteinExistence type="evidence at protein level"/>